<gene>
    <name type="primary">ALF1</name>
    <name type="ordered locus">YNL148C</name>
    <name type="ORF">N1201</name>
    <name type="ORF">N1777</name>
</gene>
<evidence type="ECO:0000255" key="1">
    <source>
        <dbReference type="PROSITE-ProRule" id="PRU00045"/>
    </source>
</evidence>
<evidence type="ECO:0000256" key="2">
    <source>
        <dbReference type="SAM" id="MobiDB-lite"/>
    </source>
</evidence>
<evidence type="ECO:0000269" key="3">
    <source>
    </source>
</evidence>
<evidence type="ECO:0000305" key="4"/>
<name>TBCB_YEAST</name>
<accession>P53904</accession>
<accession>D6W134</accession>
<reference key="1">
    <citation type="journal article" date="1995" name="Yeast">
        <title>A 43.5 kb segment of yeast chromosome XIV, which contains MFA2, MEP2, CAP/SRV2, NAM9, FKB1/FPR1/RBP1, MOM22 and CPT1, predicts an adenosine deaminase gene and 14 new open reading frames.</title>
        <authorList>
            <person name="Mallet L."/>
            <person name="Bussereau F."/>
            <person name="Jacquet M."/>
        </authorList>
    </citation>
    <scope>NUCLEOTIDE SEQUENCE [GENOMIC DNA]</scope>
    <source>
        <strain>ATCC 204508 / S288c</strain>
    </source>
</reference>
<reference key="2">
    <citation type="journal article" date="1996" name="Yeast">
        <title>The sequence of 36.8 kb from the left arm of chromosome XIV reveals 24 complete open reading frames: 18 correspond to new genes, one of which encodes a protein similar to the human myotonic dystrophy kinase.</title>
        <authorList>
            <person name="Nasr F."/>
            <person name="Becam A.-M."/>
            <person name="Herbert C.J."/>
        </authorList>
    </citation>
    <scope>NUCLEOTIDE SEQUENCE [GENOMIC DNA]</scope>
    <source>
        <strain>ATCC 96604 / S288c / FY1679</strain>
    </source>
</reference>
<reference key="3">
    <citation type="journal article" date="1997" name="Nature">
        <title>The nucleotide sequence of Saccharomyces cerevisiae chromosome XIV and its evolutionary implications.</title>
        <authorList>
            <person name="Philippsen P."/>
            <person name="Kleine K."/>
            <person name="Poehlmann R."/>
            <person name="Duesterhoeft A."/>
            <person name="Hamberg K."/>
            <person name="Hegemann J.H."/>
            <person name="Obermaier B."/>
            <person name="Urrestarazu L.A."/>
            <person name="Aert R."/>
            <person name="Albermann K."/>
            <person name="Altmann R."/>
            <person name="Andre B."/>
            <person name="Baladron V."/>
            <person name="Ballesta J.P.G."/>
            <person name="Becam A.-M."/>
            <person name="Beinhauer J.D."/>
            <person name="Boskovic J."/>
            <person name="Buitrago M.J."/>
            <person name="Bussereau F."/>
            <person name="Coster F."/>
            <person name="Crouzet M."/>
            <person name="D'Angelo M."/>
            <person name="Dal Pero F."/>
            <person name="De Antoni A."/>
            <person name="del Rey F."/>
            <person name="Doignon F."/>
            <person name="Domdey H."/>
            <person name="Dubois E."/>
            <person name="Fiedler T.A."/>
            <person name="Fleig U."/>
            <person name="Floeth M."/>
            <person name="Fritz C."/>
            <person name="Gaillardin C."/>
            <person name="Garcia-Cantalejo J.M."/>
            <person name="Glansdorff N."/>
            <person name="Goffeau A."/>
            <person name="Gueldener U."/>
            <person name="Herbert C.J."/>
            <person name="Heumann K."/>
            <person name="Heuss-Neitzel D."/>
            <person name="Hilbert H."/>
            <person name="Hinni K."/>
            <person name="Iraqui Houssaini I."/>
            <person name="Jacquet M."/>
            <person name="Jimenez A."/>
            <person name="Jonniaux J.-L."/>
            <person name="Karpfinger-Hartl L."/>
            <person name="Lanfranchi G."/>
            <person name="Lepingle A."/>
            <person name="Levesque H."/>
            <person name="Lyck R."/>
            <person name="Maftahi M."/>
            <person name="Mallet L."/>
            <person name="Maurer C.T.C."/>
            <person name="Messenguy F."/>
            <person name="Mewes H.-W."/>
            <person name="Moestl D."/>
            <person name="Nasr F."/>
            <person name="Nicaud J.-M."/>
            <person name="Niedenthal R.K."/>
            <person name="Pandolfo D."/>
            <person name="Pierard A."/>
            <person name="Piravandi E."/>
            <person name="Planta R.J."/>
            <person name="Pohl T.M."/>
            <person name="Purnelle B."/>
            <person name="Rebischung C."/>
            <person name="Remacha M.A."/>
            <person name="Revuelta J.L."/>
            <person name="Rinke M."/>
            <person name="Saiz J.E."/>
            <person name="Sartorello F."/>
            <person name="Scherens B."/>
            <person name="Sen-Gupta M."/>
            <person name="Soler-Mira A."/>
            <person name="Urbanus J.H.M."/>
            <person name="Valle G."/>
            <person name="Van Dyck L."/>
            <person name="Verhasselt P."/>
            <person name="Vierendeels F."/>
            <person name="Vissers S."/>
            <person name="Voet M."/>
            <person name="Volckaert G."/>
            <person name="Wach A."/>
            <person name="Wambutt R."/>
            <person name="Wedler H."/>
            <person name="Zollner A."/>
            <person name="Hani J."/>
        </authorList>
    </citation>
    <scope>NUCLEOTIDE SEQUENCE [LARGE SCALE GENOMIC DNA]</scope>
    <source>
        <strain>ATCC 204508 / S288c</strain>
    </source>
</reference>
<reference key="4">
    <citation type="journal article" date="2014" name="G3 (Bethesda)">
        <title>The reference genome sequence of Saccharomyces cerevisiae: Then and now.</title>
        <authorList>
            <person name="Engel S.R."/>
            <person name="Dietrich F.S."/>
            <person name="Fisk D.G."/>
            <person name="Binkley G."/>
            <person name="Balakrishnan R."/>
            <person name="Costanzo M.C."/>
            <person name="Dwight S.S."/>
            <person name="Hitz B.C."/>
            <person name="Karra K."/>
            <person name="Nash R.S."/>
            <person name="Weng S."/>
            <person name="Wong E.D."/>
            <person name="Lloyd P."/>
            <person name="Skrzypek M.S."/>
            <person name="Miyasato S.R."/>
            <person name="Simison M."/>
            <person name="Cherry J.M."/>
        </authorList>
    </citation>
    <scope>GENOME REANNOTATION</scope>
    <source>
        <strain>ATCC 204508 / S288c</strain>
    </source>
</reference>
<reference key="5">
    <citation type="journal article" date="1999" name="J. Cell Biol.">
        <title>Alf1p, a CLIP-170 domain-containing protein, is functionally and physically associated with alpha-tubulin.</title>
        <authorList>
            <person name="Feierbach B."/>
            <person name="Nogales E."/>
            <person name="Downing K.H."/>
            <person name="Stearns T."/>
        </authorList>
    </citation>
    <scope>CHARACTERIZATION</scope>
</reference>
<reference key="6">
    <citation type="journal article" date="2003" name="Nature">
        <title>Global analysis of protein expression in yeast.</title>
        <authorList>
            <person name="Ghaemmaghami S."/>
            <person name="Huh W.-K."/>
            <person name="Bower K."/>
            <person name="Howson R.W."/>
            <person name="Belle A."/>
            <person name="Dephoure N."/>
            <person name="O'Shea E.K."/>
            <person name="Weissman J.S."/>
        </authorList>
    </citation>
    <scope>LEVEL OF PROTEIN EXPRESSION [LARGE SCALE ANALYSIS]</scope>
</reference>
<comment type="function">
    <text>Acts to sequester alpha-tubulin from interaction with beta-tubulin, raising the possibility that it plays a regulatory role in the formation of the tubulin heterodimer.</text>
</comment>
<comment type="subunit">
    <text>Binds to monomeric alpha-tubulin.</text>
</comment>
<comment type="subcellular location">
    <subcellularLocation>
        <location>Cytoplasm</location>
    </subcellularLocation>
    <subcellularLocation>
        <location>Cytoplasm</location>
        <location>Cytoskeleton</location>
    </subcellularLocation>
    <text>Microtubule-associated.</text>
</comment>
<comment type="miscellaneous">
    <text evidence="3">Present with 656 molecules/cell in log phase SD medium.</text>
</comment>
<comment type="similarity">
    <text evidence="4">Belongs to the TBCB family.</text>
</comment>
<dbReference type="EMBL" id="Z46843">
    <property type="protein sequence ID" value="CAA86878.1"/>
    <property type="molecule type" value="Genomic_DNA"/>
</dbReference>
<dbReference type="EMBL" id="X92517">
    <property type="protein sequence ID" value="CAA63291.1"/>
    <property type="molecule type" value="Genomic_DNA"/>
</dbReference>
<dbReference type="EMBL" id="Z71424">
    <property type="protein sequence ID" value="CAA96031.1"/>
    <property type="molecule type" value="Genomic_DNA"/>
</dbReference>
<dbReference type="EMBL" id="BK006947">
    <property type="protein sequence ID" value="DAA10400.1"/>
    <property type="molecule type" value="Genomic_DNA"/>
</dbReference>
<dbReference type="PIR" id="S55136">
    <property type="entry name" value="S55136"/>
</dbReference>
<dbReference type="RefSeq" id="NP_014251.1">
    <property type="nucleotide sequence ID" value="NM_001182986.1"/>
</dbReference>
<dbReference type="SMR" id="P53904"/>
<dbReference type="BioGRID" id="35680">
    <property type="interactions" value="62"/>
</dbReference>
<dbReference type="DIP" id="DIP-901N"/>
<dbReference type="FunCoup" id="P53904">
    <property type="interactions" value="826"/>
</dbReference>
<dbReference type="IntAct" id="P53904">
    <property type="interactions" value="7"/>
</dbReference>
<dbReference type="STRING" id="4932.YNL148C"/>
<dbReference type="iPTMnet" id="P53904"/>
<dbReference type="PaxDb" id="4932-YNL148C"/>
<dbReference type="PeptideAtlas" id="P53904"/>
<dbReference type="EnsemblFungi" id="YNL148C_mRNA">
    <property type="protein sequence ID" value="YNL148C"/>
    <property type="gene ID" value="YNL148C"/>
</dbReference>
<dbReference type="GeneID" id="855574"/>
<dbReference type="KEGG" id="sce:YNL148C"/>
<dbReference type="AGR" id="SGD:S000005092"/>
<dbReference type="SGD" id="S000005092">
    <property type="gene designation" value="ALF1"/>
</dbReference>
<dbReference type="VEuPathDB" id="FungiDB:YNL148C"/>
<dbReference type="eggNOG" id="KOG3206">
    <property type="taxonomic scope" value="Eukaryota"/>
</dbReference>
<dbReference type="HOGENOM" id="CLU_067577_2_0_1"/>
<dbReference type="InParanoid" id="P53904"/>
<dbReference type="OMA" id="WCGIEFD"/>
<dbReference type="OrthoDB" id="5295208at2759"/>
<dbReference type="BioCyc" id="YEAST:G3O-33166-MONOMER"/>
<dbReference type="BioGRID-ORCS" id="855574">
    <property type="hits" value="1 hit in 10 CRISPR screens"/>
</dbReference>
<dbReference type="PRO" id="PR:P53904"/>
<dbReference type="Proteomes" id="UP000002311">
    <property type="component" value="Chromosome XIV"/>
</dbReference>
<dbReference type="RNAct" id="P53904">
    <property type="molecule type" value="protein"/>
</dbReference>
<dbReference type="GO" id="GO:0005737">
    <property type="term" value="C:cytoplasm"/>
    <property type="evidence" value="ECO:0007005"/>
    <property type="project" value="SGD"/>
</dbReference>
<dbReference type="GO" id="GO:0005874">
    <property type="term" value="C:microtubule"/>
    <property type="evidence" value="ECO:0007669"/>
    <property type="project" value="UniProtKB-KW"/>
</dbReference>
<dbReference type="GO" id="GO:0005634">
    <property type="term" value="C:nucleus"/>
    <property type="evidence" value="ECO:0007005"/>
    <property type="project" value="SGD"/>
</dbReference>
<dbReference type="GO" id="GO:0043014">
    <property type="term" value="F:alpha-tubulin binding"/>
    <property type="evidence" value="ECO:0000353"/>
    <property type="project" value="SGD"/>
</dbReference>
<dbReference type="GO" id="GO:0008017">
    <property type="term" value="F:microtubule binding"/>
    <property type="evidence" value="ECO:0000314"/>
    <property type="project" value="SGD"/>
</dbReference>
<dbReference type="GO" id="GO:0007023">
    <property type="term" value="P:post-chaperonin tubulin folding pathway"/>
    <property type="evidence" value="ECO:0000314"/>
    <property type="project" value="SGD"/>
</dbReference>
<dbReference type="GO" id="GO:0006457">
    <property type="term" value="P:protein folding"/>
    <property type="evidence" value="ECO:0000315"/>
    <property type="project" value="SGD"/>
</dbReference>
<dbReference type="Gene3D" id="2.30.30.190">
    <property type="entry name" value="CAP Gly-rich-like domain"/>
    <property type="match status" value="1"/>
</dbReference>
<dbReference type="Gene3D" id="3.10.20.90">
    <property type="entry name" value="Phosphatidylinositol 3-kinase Catalytic Subunit, Chain A, domain 1"/>
    <property type="match status" value="1"/>
</dbReference>
<dbReference type="InterPro" id="IPR036859">
    <property type="entry name" value="CAP-Gly_dom_sf"/>
</dbReference>
<dbReference type="InterPro" id="IPR000938">
    <property type="entry name" value="CAP-Gly_domain"/>
</dbReference>
<dbReference type="InterPro" id="IPR000626">
    <property type="entry name" value="Ubiquitin-like_dom"/>
</dbReference>
<dbReference type="InterPro" id="IPR029071">
    <property type="entry name" value="Ubiquitin-like_domsf"/>
</dbReference>
<dbReference type="Pfam" id="PF01302">
    <property type="entry name" value="CAP_GLY"/>
    <property type="match status" value="1"/>
</dbReference>
<dbReference type="Pfam" id="PF14560">
    <property type="entry name" value="Ubiquitin_2"/>
    <property type="match status" value="1"/>
</dbReference>
<dbReference type="SMART" id="SM01052">
    <property type="entry name" value="CAP_GLY"/>
    <property type="match status" value="1"/>
</dbReference>
<dbReference type="SUPFAM" id="SSF74924">
    <property type="entry name" value="Cap-Gly domain"/>
    <property type="match status" value="1"/>
</dbReference>
<dbReference type="SUPFAM" id="SSF54236">
    <property type="entry name" value="Ubiquitin-like"/>
    <property type="match status" value="1"/>
</dbReference>
<dbReference type="PROSITE" id="PS00845">
    <property type="entry name" value="CAP_GLY_1"/>
    <property type="match status" value="1"/>
</dbReference>
<dbReference type="PROSITE" id="PS50245">
    <property type="entry name" value="CAP_GLY_2"/>
    <property type="match status" value="1"/>
</dbReference>
<proteinExistence type="evidence at protein level"/>
<protein>
    <recommendedName>
        <fullName>Tubulin-specific chaperone B</fullName>
    </recommendedName>
    <alternativeName>
        <fullName>Alpha-tubulin formation protein 1</fullName>
    </alternativeName>
    <alternativeName>
        <fullName>Tubulin-folding cofactor B</fullName>
    </alternativeName>
</protein>
<organism>
    <name type="scientific">Saccharomyces cerevisiae (strain ATCC 204508 / S288c)</name>
    <name type="common">Baker's yeast</name>
    <dbReference type="NCBI Taxonomy" id="559292"/>
    <lineage>
        <taxon>Eukaryota</taxon>
        <taxon>Fungi</taxon>
        <taxon>Dikarya</taxon>
        <taxon>Ascomycota</taxon>
        <taxon>Saccharomycotina</taxon>
        <taxon>Saccharomycetes</taxon>
        <taxon>Saccharomycetales</taxon>
        <taxon>Saccharomycetaceae</taxon>
        <taxon>Saccharomyces</taxon>
    </lineage>
</organism>
<sequence length="254" mass="28354">MVRVVIESELVRTEKELPNSLKLRQFKDRLYHVTGVEPEDMEIVVKRQYDNKEIYSTKKGGAYSNEDEDANFLKGEEELIVVVTDSNAQSISNQLATQAEGIPSMEVISEEDYLRRDQSVLRWKMAHGYGRFNAAQQSQRAALAKQDEAYAREQLTAAIGRHCRVTVDGSAPREAILRYVGPLPLDVMGTWCGVEFPEAAGKNDGRINGVTLFGPVAPGHGSFVRPRAVEILSKDEESAEVEDVHDDVESDDEI</sequence>
<keyword id="KW-0143">Chaperone</keyword>
<keyword id="KW-0963">Cytoplasm</keyword>
<keyword id="KW-0206">Cytoskeleton</keyword>
<keyword id="KW-0493">Microtubule</keyword>
<keyword id="KW-1185">Reference proteome</keyword>
<feature type="chain" id="PRO_0000083536" description="Tubulin-specific chaperone B">
    <location>
        <begin position="1"/>
        <end position="254"/>
    </location>
</feature>
<feature type="domain" description="CAP-Gly" evidence="1">
    <location>
        <begin position="182"/>
        <end position="225"/>
    </location>
</feature>
<feature type="region of interest" description="Disordered" evidence="2">
    <location>
        <begin position="234"/>
        <end position="254"/>
    </location>
</feature>
<feature type="compositionally biased region" description="Acidic residues" evidence="2">
    <location>
        <begin position="237"/>
        <end position="254"/>
    </location>
</feature>